<dbReference type="EMBL" id="CP001110">
    <property type="protein sequence ID" value="ACF42730.1"/>
    <property type="molecule type" value="Genomic_DNA"/>
</dbReference>
<dbReference type="RefSeq" id="WP_012507225.1">
    <property type="nucleotide sequence ID" value="NC_011060.1"/>
</dbReference>
<dbReference type="SMR" id="B4SCF0"/>
<dbReference type="STRING" id="324925.Ppha_0402"/>
<dbReference type="KEGG" id="pph:Ppha_0402"/>
<dbReference type="eggNOG" id="COG0184">
    <property type="taxonomic scope" value="Bacteria"/>
</dbReference>
<dbReference type="HOGENOM" id="CLU_148518_0_0_10"/>
<dbReference type="OrthoDB" id="9799262at2"/>
<dbReference type="Proteomes" id="UP000002724">
    <property type="component" value="Chromosome"/>
</dbReference>
<dbReference type="GO" id="GO:0022627">
    <property type="term" value="C:cytosolic small ribosomal subunit"/>
    <property type="evidence" value="ECO:0007669"/>
    <property type="project" value="TreeGrafter"/>
</dbReference>
<dbReference type="GO" id="GO:0019843">
    <property type="term" value="F:rRNA binding"/>
    <property type="evidence" value="ECO:0007669"/>
    <property type="project" value="UniProtKB-UniRule"/>
</dbReference>
<dbReference type="GO" id="GO:0003735">
    <property type="term" value="F:structural constituent of ribosome"/>
    <property type="evidence" value="ECO:0007669"/>
    <property type="project" value="InterPro"/>
</dbReference>
<dbReference type="GO" id="GO:0006412">
    <property type="term" value="P:translation"/>
    <property type="evidence" value="ECO:0007669"/>
    <property type="project" value="UniProtKB-UniRule"/>
</dbReference>
<dbReference type="CDD" id="cd00353">
    <property type="entry name" value="Ribosomal_S15p_S13e"/>
    <property type="match status" value="1"/>
</dbReference>
<dbReference type="FunFam" id="1.10.287.10:FF:000002">
    <property type="entry name" value="30S ribosomal protein S15"/>
    <property type="match status" value="1"/>
</dbReference>
<dbReference type="Gene3D" id="6.10.250.3130">
    <property type="match status" value="1"/>
</dbReference>
<dbReference type="Gene3D" id="1.10.287.10">
    <property type="entry name" value="S15/NS1, RNA-binding"/>
    <property type="match status" value="1"/>
</dbReference>
<dbReference type="HAMAP" id="MF_01343_B">
    <property type="entry name" value="Ribosomal_uS15_B"/>
    <property type="match status" value="1"/>
</dbReference>
<dbReference type="InterPro" id="IPR000589">
    <property type="entry name" value="Ribosomal_uS15"/>
</dbReference>
<dbReference type="InterPro" id="IPR005290">
    <property type="entry name" value="Ribosomal_uS15_bac-type"/>
</dbReference>
<dbReference type="InterPro" id="IPR009068">
    <property type="entry name" value="uS15_NS1_RNA-bd_sf"/>
</dbReference>
<dbReference type="NCBIfam" id="TIGR00952">
    <property type="entry name" value="S15_bact"/>
    <property type="match status" value="1"/>
</dbReference>
<dbReference type="PANTHER" id="PTHR23321">
    <property type="entry name" value="RIBOSOMAL PROTEIN S15, BACTERIAL AND ORGANELLAR"/>
    <property type="match status" value="1"/>
</dbReference>
<dbReference type="PANTHER" id="PTHR23321:SF26">
    <property type="entry name" value="SMALL RIBOSOMAL SUBUNIT PROTEIN US15M"/>
    <property type="match status" value="1"/>
</dbReference>
<dbReference type="Pfam" id="PF00312">
    <property type="entry name" value="Ribosomal_S15"/>
    <property type="match status" value="1"/>
</dbReference>
<dbReference type="SMART" id="SM01387">
    <property type="entry name" value="Ribosomal_S15"/>
    <property type="match status" value="1"/>
</dbReference>
<dbReference type="SUPFAM" id="SSF47060">
    <property type="entry name" value="S15/NS1 RNA-binding domain"/>
    <property type="match status" value="1"/>
</dbReference>
<dbReference type="PROSITE" id="PS00362">
    <property type="entry name" value="RIBOSOMAL_S15"/>
    <property type="match status" value="1"/>
</dbReference>
<gene>
    <name evidence="1" type="primary">rpsO</name>
    <name type="ordered locus">Ppha_0402</name>
</gene>
<name>RS15_PELPB</name>
<proteinExistence type="inferred from homology"/>
<organism>
    <name type="scientific">Pelodictyon phaeoclathratiforme (strain DSM 5477 / BU-1)</name>
    <dbReference type="NCBI Taxonomy" id="324925"/>
    <lineage>
        <taxon>Bacteria</taxon>
        <taxon>Pseudomonadati</taxon>
        <taxon>Chlorobiota</taxon>
        <taxon>Chlorobiia</taxon>
        <taxon>Chlorobiales</taxon>
        <taxon>Chlorobiaceae</taxon>
        <taxon>Chlorobium/Pelodictyon group</taxon>
        <taxon>Pelodictyon</taxon>
    </lineage>
</organism>
<reference key="1">
    <citation type="submission" date="2008-06" db="EMBL/GenBank/DDBJ databases">
        <title>Complete sequence of Pelodictyon phaeoclathratiforme BU-1.</title>
        <authorList>
            <consortium name="US DOE Joint Genome Institute"/>
            <person name="Lucas S."/>
            <person name="Copeland A."/>
            <person name="Lapidus A."/>
            <person name="Glavina del Rio T."/>
            <person name="Dalin E."/>
            <person name="Tice H."/>
            <person name="Bruce D."/>
            <person name="Goodwin L."/>
            <person name="Pitluck S."/>
            <person name="Schmutz J."/>
            <person name="Larimer F."/>
            <person name="Land M."/>
            <person name="Hauser L."/>
            <person name="Kyrpides N."/>
            <person name="Mikhailova N."/>
            <person name="Liu Z."/>
            <person name="Li T."/>
            <person name="Zhao F."/>
            <person name="Overmann J."/>
            <person name="Bryant D.A."/>
            <person name="Richardson P."/>
        </authorList>
    </citation>
    <scope>NUCLEOTIDE SEQUENCE [LARGE SCALE GENOMIC DNA]</scope>
    <source>
        <strain>DSM 5477 / BU-1</strain>
    </source>
</reference>
<feature type="chain" id="PRO_1000143148" description="Small ribosomal subunit protein uS15">
    <location>
        <begin position="1"/>
        <end position="89"/>
    </location>
</feature>
<protein>
    <recommendedName>
        <fullName evidence="1">Small ribosomal subunit protein uS15</fullName>
    </recommendedName>
    <alternativeName>
        <fullName evidence="2">30S ribosomal protein S15</fullName>
    </alternativeName>
</protein>
<keyword id="KW-1185">Reference proteome</keyword>
<keyword id="KW-0687">Ribonucleoprotein</keyword>
<keyword id="KW-0689">Ribosomal protein</keyword>
<keyword id="KW-0694">RNA-binding</keyword>
<keyword id="KW-0699">rRNA-binding</keyword>
<evidence type="ECO:0000255" key="1">
    <source>
        <dbReference type="HAMAP-Rule" id="MF_01343"/>
    </source>
</evidence>
<evidence type="ECO:0000305" key="2"/>
<sequence>MSLTKEFKADVIKQFGASEKNTGKSEVQVALYTRRISDLTGHLQLHPKDKHSRRGLLMLVAKRKKMLNYVKNIDIDRYRKVIAELDLRK</sequence>
<accession>B4SCF0</accession>
<comment type="function">
    <text evidence="1">One of the primary rRNA binding proteins, it binds directly to 16S rRNA where it helps nucleate assembly of the platform of the 30S subunit by binding and bridging several RNA helices of the 16S rRNA.</text>
</comment>
<comment type="function">
    <text evidence="1">Forms an intersubunit bridge (bridge B4) with the 23S rRNA of the 50S subunit in the ribosome.</text>
</comment>
<comment type="subunit">
    <text evidence="1">Part of the 30S ribosomal subunit. Forms a bridge to the 50S subunit in the 70S ribosome, contacting the 23S rRNA.</text>
</comment>
<comment type="similarity">
    <text evidence="1">Belongs to the universal ribosomal protein uS15 family.</text>
</comment>